<proteinExistence type="inferred from homology"/>
<accession>P47656</accession>
<accession>Q49447</accession>
<name>RS9_MYCGE</name>
<organism>
    <name type="scientific">Mycoplasma genitalium (strain ATCC 33530 / DSM 19775 / NCTC 10195 / G37)</name>
    <name type="common">Mycoplasmoides genitalium</name>
    <dbReference type="NCBI Taxonomy" id="243273"/>
    <lineage>
        <taxon>Bacteria</taxon>
        <taxon>Bacillati</taxon>
        <taxon>Mycoplasmatota</taxon>
        <taxon>Mycoplasmoidales</taxon>
        <taxon>Mycoplasmoidaceae</taxon>
        <taxon>Mycoplasmoides</taxon>
    </lineage>
</organism>
<reference key="1">
    <citation type="journal article" date="1995" name="Science">
        <title>The minimal gene complement of Mycoplasma genitalium.</title>
        <authorList>
            <person name="Fraser C.M."/>
            <person name="Gocayne J.D."/>
            <person name="White O."/>
            <person name="Adams M.D."/>
            <person name="Clayton R.A."/>
            <person name="Fleischmann R.D."/>
            <person name="Bult C.J."/>
            <person name="Kerlavage A.R."/>
            <person name="Sutton G.G."/>
            <person name="Kelley J.M."/>
            <person name="Fritchman J.L."/>
            <person name="Weidman J.F."/>
            <person name="Small K.V."/>
            <person name="Sandusky M."/>
            <person name="Fuhrmann J.L."/>
            <person name="Nguyen D.T."/>
            <person name="Utterback T.R."/>
            <person name="Saudek D.M."/>
            <person name="Phillips C.A."/>
            <person name="Merrick J.M."/>
            <person name="Tomb J.-F."/>
            <person name="Dougherty B.A."/>
            <person name="Bott K.F."/>
            <person name="Hu P.-C."/>
            <person name="Lucier T.S."/>
            <person name="Peterson S.N."/>
            <person name="Smith H.O."/>
            <person name="Hutchison C.A. III"/>
            <person name="Venter J.C."/>
        </authorList>
    </citation>
    <scope>NUCLEOTIDE SEQUENCE [LARGE SCALE GENOMIC DNA]</scope>
    <source>
        <strain>ATCC 33530 / DSM 19775 / NCTC 10195 / G37</strain>
    </source>
</reference>
<reference key="2">
    <citation type="journal article" date="1993" name="J. Bacteriol.">
        <title>A survey of the Mycoplasma genitalium genome by using random sequencing.</title>
        <authorList>
            <person name="Peterson S.N."/>
            <person name="Hu P.-C."/>
            <person name="Bott K.F."/>
            <person name="Hutchison C.A. III"/>
        </authorList>
    </citation>
    <scope>NUCLEOTIDE SEQUENCE [GENOMIC DNA]</scope>
    <source>
        <strain>ATCC 33530 / DSM 19775 / NCTC 10195 / G37</strain>
    </source>
</reference>
<protein>
    <recommendedName>
        <fullName evidence="1">Small ribosomal subunit protein uS9</fullName>
    </recommendedName>
    <alternativeName>
        <fullName>30S ribosomal protein S9</fullName>
    </alternativeName>
</protein>
<gene>
    <name type="primary">rpsI</name>
    <name type="synonym">rps9</name>
    <name type="ordered locus">MG417</name>
</gene>
<feature type="chain" id="PRO_0000111375" description="Small ribosomal subunit protein uS9">
    <location>
        <begin position="1"/>
        <end position="132"/>
    </location>
</feature>
<feature type="sequence conflict" description="In Ref. 2; AAD10556." evidence="1" ref="2">
    <original>A</original>
    <variation>R</variation>
    <location>
        <position position="80"/>
    </location>
</feature>
<keyword id="KW-1185">Reference proteome</keyword>
<keyword id="KW-0687">Ribonucleoprotein</keyword>
<keyword id="KW-0689">Ribosomal protein</keyword>
<comment type="similarity">
    <text evidence="1">Belongs to the universal ribosomal protein uS9 family.</text>
</comment>
<evidence type="ECO:0000305" key="1"/>
<sequence length="132" mass="15148">MDKKSFYGLGRRKSSTAKVYLYQSKDKGKITINHRNPSDYFPNKLVIQDMEQPLELTKLKDNFDINVVVKGGGFTGQAGAIRLGIVRALIKFNPDLKKLLKTKKLTTRDKRAKERKKFGLYGARRAPQFTKR</sequence>
<dbReference type="EMBL" id="L43967">
    <property type="protein sequence ID" value="AAC71643.1"/>
    <property type="molecule type" value="Genomic_DNA"/>
</dbReference>
<dbReference type="EMBL" id="U01744">
    <property type="protein sequence ID" value="AAD10556.1"/>
    <property type="molecule type" value="Genomic_DNA"/>
</dbReference>
<dbReference type="PIR" id="A64246">
    <property type="entry name" value="A64246"/>
</dbReference>
<dbReference type="RefSeq" id="WP_010869475.1">
    <property type="nucleotide sequence ID" value="NC_000908.2"/>
</dbReference>
<dbReference type="SMR" id="P47656"/>
<dbReference type="FunCoup" id="P47656">
    <property type="interactions" value="224"/>
</dbReference>
<dbReference type="STRING" id="243273.MG_417"/>
<dbReference type="GeneID" id="88282600"/>
<dbReference type="KEGG" id="mge:MG_417"/>
<dbReference type="eggNOG" id="COG0103">
    <property type="taxonomic scope" value="Bacteria"/>
</dbReference>
<dbReference type="HOGENOM" id="CLU_046483_2_1_14"/>
<dbReference type="InParanoid" id="P47656"/>
<dbReference type="OrthoDB" id="9803965at2"/>
<dbReference type="BioCyc" id="MGEN243273:G1GJ2-512-MONOMER"/>
<dbReference type="Proteomes" id="UP000000807">
    <property type="component" value="Chromosome"/>
</dbReference>
<dbReference type="GO" id="GO:0022627">
    <property type="term" value="C:cytosolic small ribosomal subunit"/>
    <property type="evidence" value="ECO:0000318"/>
    <property type="project" value="GO_Central"/>
</dbReference>
<dbReference type="GO" id="GO:0003723">
    <property type="term" value="F:RNA binding"/>
    <property type="evidence" value="ECO:0000318"/>
    <property type="project" value="GO_Central"/>
</dbReference>
<dbReference type="GO" id="GO:0003735">
    <property type="term" value="F:structural constituent of ribosome"/>
    <property type="evidence" value="ECO:0000318"/>
    <property type="project" value="GO_Central"/>
</dbReference>
<dbReference type="GO" id="GO:0006412">
    <property type="term" value="P:translation"/>
    <property type="evidence" value="ECO:0007669"/>
    <property type="project" value="UniProtKB-UniRule"/>
</dbReference>
<dbReference type="FunFam" id="3.30.230.10:FF:000001">
    <property type="entry name" value="30S ribosomal protein S9"/>
    <property type="match status" value="1"/>
</dbReference>
<dbReference type="Gene3D" id="3.30.230.10">
    <property type="match status" value="1"/>
</dbReference>
<dbReference type="HAMAP" id="MF_00532_B">
    <property type="entry name" value="Ribosomal_uS9_B"/>
    <property type="match status" value="1"/>
</dbReference>
<dbReference type="InterPro" id="IPR020568">
    <property type="entry name" value="Ribosomal_Su5_D2-typ_SF"/>
</dbReference>
<dbReference type="InterPro" id="IPR000754">
    <property type="entry name" value="Ribosomal_uS9"/>
</dbReference>
<dbReference type="InterPro" id="IPR023035">
    <property type="entry name" value="Ribosomal_uS9_bac/plastid"/>
</dbReference>
<dbReference type="InterPro" id="IPR020574">
    <property type="entry name" value="Ribosomal_uS9_CS"/>
</dbReference>
<dbReference type="InterPro" id="IPR014721">
    <property type="entry name" value="Ribsml_uS5_D2-typ_fold_subgr"/>
</dbReference>
<dbReference type="NCBIfam" id="NF001099">
    <property type="entry name" value="PRK00132.1"/>
    <property type="match status" value="1"/>
</dbReference>
<dbReference type="PANTHER" id="PTHR21569">
    <property type="entry name" value="RIBOSOMAL PROTEIN S9"/>
    <property type="match status" value="1"/>
</dbReference>
<dbReference type="PANTHER" id="PTHR21569:SF1">
    <property type="entry name" value="SMALL RIBOSOMAL SUBUNIT PROTEIN US9M"/>
    <property type="match status" value="1"/>
</dbReference>
<dbReference type="Pfam" id="PF00380">
    <property type="entry name" value="Ribosomal_S9"/>
    <property type="match status" value="1"/>
</dbReference>
<dbReference type="SUPFAM" id="SSF54211">
    <property type="entry name" value="Ribosomal protein S5 domain 2-like"/>
    <property type="match status" value="1"/>
</dbReference>
<dbReference type="PROSITE" id="PS00360">
    <property type="entry name" value="RIBOSOMAL_S9"/>
    <property type="match status" value="1"/>
</dbReference>